<name>NUOA_GEOTN</name>
<evidence type="ECO:0000255" key="1">
    <source>
        <dbReference type="HAMAP-Rule" id="MF_01394"/>
    </source>
</evidence>
<gene>
    <name evidence="1" type="primary">nuoA</name>
    <name type="ordered locus">GTNG_3302</name>
</gene>
<keyword id="KW-1003">Cell membrane</keyword>
<keyword id="KW-0472">Membrane</keyword>
<keyword id="KW-0520">NAD</keyword>
<keyword id="KW-0874">Quinone</keyword>
<keyword id="KW-1278">Translocase</keyword>
<keyword id="KW-0812">Transmembrane</keyword>
<keyword id="KW-1133">Transmembrane helix</keyword>
<keyword id="KW-0813">Transport</keyword>
<sequence>MSNIYANSYLIVFVFLCLGVLLPIGALTIGRWLRPNVPDEAKATTYESGNIPFHDSRIQFQVRYYLFALLFVIFDVETVFLYPWAVVYDQLGLFALVEMIIFIVLLAIGLIYAWKKKVLRWM</sequence>
<reference key="1">
    <citation type="journal article" date="2007" name="Proc. Natl. Acad. Sci. U.S.A.">
        <title>Genome and proteome of long-chain alkane degrading Geobacillus thermodenitrificans NG80-2 isolated from a deep-subsurface oil reservoir.</title>
        <authorList>
            <person name="Feng L."/>
            <person name="Wang W."/>
            <person name="Cheng J."/>
            <person name="Ren Y."/>
            <person name="Zhao G."/>
            <person name="Gao C."/>
            <person name="Tang Y."/>
            <person name="Liu X."/>
            <person name="Han W."/>
            <person name="Peng X."/>
            <person name="Liu R."/>
            <person name="Wang L."/>
        </authorList>
    </citation>
    <scope>NUCLEOTIDE SEQUENCE [LARGE SCALE GENOMIC DNA]</scope>
    <source>
        <strain>NG80-2</strain>
    </source>
</reference>
<accession>A4ITI7</accession>
<protein>
    <recommendedName>
        <fullName evidence="1">NADH-quinone oxidoreductase subunit A</fullName>
        <ecNumber evidence="1">7.1.1.-</ecNumber>
    </recommendedName>
    <alternativeName>
        <fullName evidence="1">NADH dehydrogenase I subunit A</fullName>
    </alternativeName>
    <alternativeName>
        <fullName evidence="1">NDH-1 subunit A</fullName>
    </alternativeName>
    <alternativeName>
        <fullName evidence="1">NUO1</fullName>
    </alternativeName>
</protein>
<organism>
    <name type="scientific">Geobacillus thermodenitrificans (strain NG80-2)</name>
    <dbReference type="NCBI Taxonomy" id="420246"/>
    <lineage>
        <taxon>Bacteria</taxon>
        <taxon>Bacillati</taxon>
        <taxon>Bacillota</taxon>
        <taxon>Bacilli</taxon>
        <taxon>Bacillales</taxon>
        <taxon>Anoxybacillaceae</taxon>
        <taxon>Geobacillus</taxon>
    </lineage>
</organism>
<feature type="chain" id="PRO_0000362688" description="NADH-quinone oxidoreductase subunit A">
    <location>
        <begin position="1"/>
        <end position="122"/>
    </location>
</feature>
<feature type="transmembrane region" description="Helical" evidence="1">
    <location>
        <begin position="10"/>
        <end position="30"/>
    </location>
</feature>
<feature type="transmembrane region" description="Helical" evidence="1">
    <location>
        <begin position="67"/>
        <end position="87"/>
    </location>
</feature>
<feature type="transmembrane region" description="Helical" evidence="1">
    <location>
        <begin position="91"/>
        <end position="111"/>
    </location>
</feature>
<proteinExistence type="inferred from homology"/>
<dbReference type="EC" id="7.1.1.-" evidence="1"/>
<dbReference type="EMBL" id="CP000557">
    <property type="protein sequence ID" value="ABO68641.1"/>
    <property type="molecule type" value="Genomic_DNA"/>
</dbReference>
<dbReference type="RefSeq" id="WP_008880691.1">
    <property type="nucleotide sequence ID" value="NC_009328.1"/>
</dbReference>
<dbReference type="SMR" id="A4ITI7"/>
<dbReference type="GeneID" id="87622588"/>
<dbReference type="KEGG" id="gtn:GTNG_3302"/>
<dbReference type="eggNOG" id="COG0838">
    <property type="taxonomic scope" value="Bacteria"/>
</dbReference>
<dbReference type="HOGENOM" id="CLU_119549_1_1_9"/>
<dbReference type="Proteomes" id="UP000001578">
    <property type="component" value="Chromosome"/>
</dbReference>
<dbReference type="GO" id="GO:0030964">
    <property type="term" value="C:NADH dehydrogenase complex"/>
    <property type="evidence" value="ECO:0007669"/>
    <property type="project" value="TreeGrafter"/>
</dbReference>
<dbReference type="GO" id="GO:0005886">
    <property type="term" value="C:plasma membrane"/>
    <property type="evidence" value="ECO:0007669"/>
    <property type="project" value="UniProtKB-SubCell"/>
</dbReference>
<dbReference type="GO" id="GO:0008137">
    <property type="term" value="F:NADH dehydrogenase (ubiquinone) activity"/>
    <property type="evidence" value="ECO:0007669"/>
    <property type="project" value="InterPro"/>
</dbReference>
<dbReference type="GO" id="GO:0050136">
    <property type="term" value="F:NADH:ubiquinone reductase (non-electrogenic) activity"/>
    <property type="evidence" value="ECO:0007669"/>
    <property type="project" value="UniProtKB-UniRule"/>
</dbReference>
<dbReference type="GO" id="GO:0048038">
    <property type="term" value="F:quinone binding"/>
    <property type="evidence" value="ECO:0007669"/>
    <property type="project" value="UniProtKB-KW"/>
</dbReference>
<dbReference type="Gene3D" id="1.20.58.1610">
    <property type="entry name" value="NADH:ubiquinone/plastoquinone oxidoreductase, chain 3"/>
    <property type="match status" value="1"/>
</dbReference>
<dbReference type="HAMAP" id="MF_01394">
    <property type="entry name" value="NDH1_NuoA"/>
    <property type="match status" value="1"/>
</dbReference>
<dbReference type="InterPro" id="IPR023043">
    <property type="entry name" value="NAD(P)H_OxRDtase_bac/plastid"/>
</dbReference>
<dbReference type="InterPro" id="IPR000440">
    <property type="entry name" value="NADH_UbQ/plastoQ_OxRdtase_su3"/>
</dbReference>
<dbReference type="InterPro" id="IPR038430">
    <property type="entry name" value="NDAH_ubi_oxred_su3_sf"/>
</dbReference>
<dbReference type="NCBIfam" id="NF005839">
    <property type="entry name" value="PRK07756.1"/>
    <property type="match status" value="1"/>
</dbReference>
<dbReference type="PANTHER" id="PTHR11058">
    <property type="entry name" value="NADH-UBIQUINONE OXIDOREDUCTASE CHAIN 3"/>
    <property type="match status" value="1"/>
</dbReference>
<dbReference type="PANTHER" id="PTHR11058:SF9">
    <property type="entry name" value="NADH-UBIQUINONE OXIDOREDUCTASE CHAIN 3"/>
    <property type="match status" value="1"/>
</dbReference>
<dbReference type="Pfam" id="PF00507">
    <property type="entry name" value="Oxidored_q4"/>
    <property type="match status" value="1"/>
</dbReference>
<comment type="function">
    <text evidence="1">NDH-1 shuttles electrons from NADH, via FMN and iron-sulfur (Fe-S) centers, to quinones in the respiratory chain. The immediate electron acceptor for the enzyme in this species is believed to be a menaquinone. Couples the redox reaction to proton translocation (for every two electrons transferred, four hydrogen ions are translocated across the cytoplasmic membrane), and thus conserves the redox energy in a proton gradient.</text>
</comment>
<comment type="catalytic activity">
    <reaction evidence="1">
        <text>a quinone + NADH + 5 H(+)(in) = a quinol + NAD(+) + 4 H(+)(out)</text>
        <dbReference type="Rhea" id="RHEA:57888"/>
        <dbReference type="ChEBI" id="CHEBI:15378"/>
        <dbReference type="ChEBI" id="CHEBI:24646"/>
        <dbReference type="ChEBI" id="CHEBI:57540"/>
        <dbReference type="ChEBI" id="CHEBI:57945"/>
        <dbReference type="ChEBI" id="CHEBI:132124"/>
    </reaction>
</comment>
<comment type="subunit">
    <text evidence="1">NDH-1 is composed of 14 different subunits. Subunits NuoA, H, J, K, L, M, N constitute the membrane sector of the complex.</text>
</comment>
<comment type="subcellular location">
    <subcellularLocation>
        <location evidence="1">Cell membrane</location>
        <topology evidence="1">Multi-pass membrane protein</topology>
    </subcellularLocation>
</comment>
<comment type="similarity">
    <text evidence="1">Belongs to the complex I subunit 3 family.</text>
</comment>